<protein>
    <recommendedName>
        <fullName evidence="1">Threonine--tRNA ligase</fullName>
        <ecNumber evidence="1">6.1.1.3</ecNumber>
    </recommendedName>
    <alternativeName>
        <fullName evidence="1">Threonyl-tRNA synthetase</fullName>
        <shortName evidence="1">ThrRS</shortName>
    </alternativeName>
</protein>
<proteinExistence type="inferred from homology"/>
<sequence>MPIITLPDGAQRTYSTPVTIAEIAAEIGPGLAKAAIAGEVNGELVDTCIPISVNANINIITSKNKEGIDIIRHSFAHLLGHAIKQLYPDAKMAIGPVIENGFYYDIAYKDTFSLDDLNQIELRIKELIKQDYDVVVEEVSKEKARKTFLDRDEAYKVQIIDEIPDNETIKLYKHQEYIDMCRGPHVPNTKHLRAFSLMKVSGAYWRGDSNNEMLQRIYGTAWGSTKELEAYLLKIEEAEKRDHRKIGKKLDLFHTQEEAPGMIFWHPKGWSIYQVLESFIRETLILNDYKEIKTPQTVDRSLWEKSGHWDKFKEDMFTTTSENREYAIKPMNCPCHIQVFNEGLKSYRDLPIRLAEFGSCHRNEPSGALHGLMRVRNFVQDDAHIFCTEAQIQDEVSKFIDLVFDVYKAFGFESIIIKLSTRPTKRVGSDEIWDKSEKALADALNIKKFEWSYLPGEGAFYGPKIEFSLKDCIDRVWQCGTIQVDFSMPHRLGASYIDENSQKKVPVMLHRAILGSFERFIGILIEEYEGKFPPWLSPIQVIVIGITDRNSIKCKEISNLLMLRGYRATYDTRNEKVGLKIREHTLQRIPYLLIIGDKEQEEGTVSVRTMHGIDMGSMKLTEFQEIINEAISLKGNYKPVPKR</sequence>
<comment type="function">
    <text evidence="1">Catalyzes the attachment of threonine to tRNA(Thr) in a two-step reaction: L-threonine is first activated by ATP to form Thr-AMP and then transferred to the acceptor end of tRNA(Thr). Also edits incorrectly charged L-seryl-tRNA(Thr).</text>
</comment>
<comment type="catalytic activity">
    <reaction evidence="1">
        <text>tRNA(Thr) + L-threonine + ATP = L-threonyl-tRNA(Thr) + AMP + diphosphate + H(+)</text>
        <dbReference type="Rhea" id="RHEA:24624"/>
        <dbReference type="Rhea" id="RHEA-COMP:9670"/>
        <dbReference type="Rhea" id="RHEA-COMP:9704"/>
        <dbReference type="ChEBI" id="CHEBI:15378"/>
        <dbReference type="ChEBI" id="CHEBI:30616"/>
        <dbReference type="ChEBI" id="CHEBI:33019"/>
        <dbReference type="ChEBI" id="CHEBI:57926"/>
        <dbReference type="ChEBI" id="CHEBI:78442"/>
        <dbReference type="ChEBI" id="CHEBI:78534"/>
        <dbReference type="ChEBI" id="CHEBI:456215"/>
        <dbReference type="EC" id="6.1.1.3"/>
    </reaction>
</comment>
<comment type="cofactor">
    <cofactor evidence="1">
        <name>Zn(2+)</name>
        <dbReference type="ChEBI" id="CHEBI:29105"/>
    </cofactor>
    <text evidence="1">Binds 1 zinc ion per subunit.</text>
</comment>
<comment type="subunit">
    <text evidence="1">Homodimer.</text>
</comment>
<comment type="subcellular location">
    <subcellularLocation>
        <location evidence="1">Cytoplasm</location>
    </subcellularLocation>
</comment>
<comment type="similarity">
    <text evidence="1">Belongs to the class-II aminoacyl-tRNA synthetase family.</text>
</comment>
<reference key="1">
    <citation type="journal article" date="2003" name="Proc. Natl. Acad. Sci. U.S.A.">
        <title>Genome sequence of the cyanobacterium Prochlorococcus marinus SS120, a nearly minimal oxyphototrophic genome.</title>
        <authorList>
            <person name="Dufresne A."/>
            <person name="Salanoubat M."/>
            <person name="Partensky F."/>
            <person name="Artiguenave F."/>
            <person name="Axmann I.M."/>
            <person name="Barbe V."/>
            <person name="Duprat S."/>
            <person name="Galperin M.Y."/>
            <person name="Koonin E.V."/>
            <person name="Le Gall F."/>
            <person name="Makarova K.S."/>
            <person name="Ostrowski M."/>
            <person name="Oztas S."/>
            <person name="Robert C."/>
            <person name="Rogozin I.B."/>
            <person name="Scanlan D.J."/>
            <person name="Tandeau de Marsac N."/>
            <person name="Weissenbach J."/>
            <person name="Wincker P."/>
            <person name="Wolf Y.I."/>
            <person name="Hess W.R."/>
        </authorList>
    </citation>
    <scope>NUCLEOTIDE SEQUENCE [LARGE SCALE GENOMIC DNA]</scope>
    <source>
        <strain>SARG / CCMP1375 / SS120</strain>
    </source>
</reference>
<accession>Q7VBM8</accession>
<gene>
    <name evidence="1" type="primary">thrS</name>
    <name type="ordered locus">Pro_1064</name>
</gene>
<feature type="chain" id="PRO_0000101024" description="Threonine--tRNA ligase">
    <location>
        <begin position="1"/>
        <end position="643"/>
    </location>
</feature>
<feature type="domain" description="TGS" evidence="2">
    <location>
        <begin position="1"/>
        <end position="61"/>
    </location>
</feature>
<feature type="region of interest" description="Catalytic" evidence="1">
    <location>
        <begin position="242"/>
        <end position="533"/>
    </location>
</feature>
<feature type="binding site" evidence="1">
    <location>
        <position position="333"/>
    </location>
    <ligand>
        <name>Zn(2+)</name>
        <dbReference type="ChEBI" id="CHEBI:29105"/>
    </ligand>
</feature>
<feature type="binding site" evidence="1">
    <location>
        <position position="384"/>
    </location>
    <ligand>
        <name>Zn(2+)</name>
        <dbReference type="ChEBI" id="CHEBI:29105"/>
    </ligand>
</feature>
<feature type="binding site" evidence="1">
    <location>
        <position position="510"/>
    </location>
    <ligand>
        <name>Zn(2+)</name>
        <dbReference type="ChEBI" id="CHEBI:29105"/>
    </ligand>
</feature>
<name>SYT_PROMA</name>
<evidence type="ECO:0000255" key="1">
    <source>
        <dbReference type="HAMAP-Rule" id="MF_00184"/>
    </source>
</evidence>
<evidence type="ECO:0000255" key="2">
    <source>
        <dbReference type="PROSITE-ProRule" id="PRU01228"/>
    </source>
</evidence>
<organism>
    <name type="scientific">Prochlorococcus marinus (strain SARG / CCMP1375 / SS120)</name>
    <dbReference type="NCBI Taxonomy" id="167539"/>
    <lineage>
        <taxon>Bacteria</taxon>
        <taxon>Bacillati</taxon>
        <taxon>Cyanobacteriota</taxon>
        <taxon>Cyanophyceae</taxon>
        <taxon>Synechococcales</taxon>
        <taxon>Prochlorococcaceae</taxon>
        <taxon>Prochlorococcus</taxon>
    </lineage>
</organism>
<dbReference type="EC" id="6.1.1.3" evidence="1"/>
<dbReference type="EMBL" id="AE017126">
    <property type="protein sequence ID" value="AAQ00109.1"/>
    <property type="molecule type" value="Genomic_DNA"/>
</dbReference>
<dbReference type="RefSeq" id="NP_875456.1">
    <property type="nucleotide sequence ID" value="NC_005042.1"/>
</dbReference>
<dbReference type="RefSeq" id="WP_011125216.1">
    <property type="nucleotide sequence ID" value="NC_005042.1"/>
</dbReference>
<dbReference type="SMR" id="Q7VBM8"/>
<dbReference type="STRING" id="167539.Pro_1064"/>
<dbReference type="EnsemblBacteria" id="AAQ00109">
    <property type="protein sequence ID" value="AAQ00109"/>
    <property type="gene ID" value="Pro_1064"/>
</dbReference>
<dbReference type="KEGG" id="pma:Pro_1064"/>
<dbReference type="PATRIC" id="fig|167539.5.peg.1114"/>
<dbReference type="eggNOG" id="COG0441">
    <property type="taxonomic scope" value="Bacteria"/>
</dbReference>
<dbReference type="HOGENOM" id="CLU_008554_0_1_3"/>
<dbReference type="OrthoDB" id="9802304at2"/>
<dbReference type="Proteomes" id="UP000001420">
    <property type="component" value="Chromosome"/>
</dbReference>
<dbReference type="GO" id="GO:0005829">
    <property type="term" value="C:cytosol"/>
    <property type="evidence" value="ECO:0007669"/>
    <property type="project" value="TreeGrafter"/>
</dbReference>
<dbReference type="GO" id="GO:0005524">
    <property type="term" value="F:ATP binding"/>
    <property type="evidence" value="ECO:0007669"/>
    <property type="project" value="UniProtKB-UniRule"/>
</dbReference>
<dbReference type="GO" id="GO:0046872">
    <property type="term" value="F:metal ion binding"/>
    <property type="evidence" value="ECO:0007669"/>
    <property type="project" value="UniProtKB-KW"/>
</dbReference>
<dbReference type="GO" id="GO:0004829">
    <property type="term" value="F:threonine-tRNA ligase activity"/>
    <property type="evidence" value="ECO:0007669"/>
    <property type="project" value="UniProtKB-UniRule"/>
</dbReference>
<dbReference type="GO" id="GO:0000049">
    <property type="term" value="F:tRNA binding"/>
    <property type="evidence" value="ECO:0007669"/>
    <property type="project" value="UniProtKB-KW"/>
</dbReference>
<dbReference type="GO" id="GO:0006435">
    <property type="term" value="P:threonyl-tRNA aminoacylation"/>
    <property type="evidence" value="ECO:0007669"/>
    <property type="project" value="UniProtKB-UniRule"/>
</dbReference>
<dbReference type="CDD" id="cd01667">
    <property type="entry name" value="TGS_ThrRS"/>
    <property type="match status" value="1"/>
</dbReference>
<dbReference type="CDD" id="cd00860">
    <property type="entry name" value="ThrRS_anticodon"/>
    <property type="match status" value="1"/>
</dbReference>
<dbReference type="CDD" id="cd00771">
    <property type="entry name" value="ThrRS_core"/>
    <property type="match status" value="1"/>
</dbReference>
<dbReference type="FunFam" id="3.10.20.30:FF:000005">
    <property type="entry name" value="Threonine--tRNA ligase"/>
    <property type="match status" value="1"/>
</dbReference>
<dbReference type="FunFam" id="3.30.54.20:FF:000002">
    <property type="entry name" value="Threonine--tRNA ligase"/>
    <property type="match status" value="1"/>
</dbReference>
<dbReference type="FunFam" id="3.30.930.10:FF:000002">
    <property type="entry name" value="Threonine--tRNA ligase"/>
    <property type="match status" value="1"/>
</dbReference>
<dbReference type="FunFam" id="3.40.50.800:FF:000001">
    <property type="entry name" value="Threonine--tRNA ligase"/>
    <property type="match status" value="1"/>
</dbReference>
<dbReference type="FunFam" id="3.30.980.10:FF:000005">
    <property type="entry name" value="Threonyl-tRNA synthetase, mitochondrial"/>
    <property type="match status" value="1"/>
</dbReference>
<dbReference type="Gene3D" id="3.10.20.30">
    <property type="match status" value="1"/>
</dbReference>
<dbReference type="Gene3D" id="3.30.54.20">
    <property type="match status" value="1"/>
</dbReference>
<dbReference type="Gene3D" id="3.40.50.800">
    <property type="entry name" value="Anticodon-binding domain"/>
    <property type="match status" value="1"/>
</dbReference>
<dbReference type="Gene3D" id="3.30.930.10">
    <property type="entry name" value="Bira Bifunctional Protein, Domain 2"/>
    <property type="match status" value="1"/>
</dbReference>
<dbReference type="Gene3D" id="3.30.980.10">
    <property type="entry name" value="Threonyl-trna Synthetase, Chain A, domain 2"/>
    <property type="match status" value="1"/>
</dbReference>
<dbReference type="HAMAP" id="MF_00184">
    <property type="entry name" value="Thr_tRNA_synth"/>
    <property type="match status" value="1"/>
</dbReference>
<dbReference type="InterPro" id="IPR002314">
    <property type="entry name" value="aa-tRNA-synt_IIb"/>
</dbReference>
<dbReference type="InterPro" id="IPR006195">
    <property type="entry name" value="aa-tRNA-synth_II"/>
</dbReference>
<dbReference type="InterPro" id="IPR045864">
    <property type="entry name" value="aa-tRNA-synth_II/BPL/LPL"/>
</dbReference>
<dbReference type="InterPro" id="IPR004154">
    <property type="entry name" value="Anticodon-bd"/>
</dbReference>
<dbReference type="InterPro" id="IPR036621">
    <property type="entry name" value="Anticodon-bd_dom_sf"/>
</dbReference>
<dbReference type="InterPro" id="IPR012675">
    <property type="entry name" value="Beta-grasp_dom_sf"/>
</dbReference>
<dbReference type="InterPro" id="IPR004095">
    <property type="entry name" value="TGS"/>
</dbReference>
<dbReference type="InterPro" id="IPR012676">
    <property type="entry name" value="TGS-like"/>
</dbReference>
<dbReference type="InterPro" id="IPR002320">
    <property type="entry name" value="Thr-tRNA-ligase_IIa"/>
</dbReference>
<dbReference type="InterPro" id="IPR018163">
    <property type="entry name" value="Thr/Ala-tRNA-synth_IIc_edit"/>
</dbReference>
<dbReference type="InterPro" id="IPR047246">
    <property type="entry name" value="ThrRS_anticodon"/>
</dbReference>
<dbReference type="InterPro" id="IPR033728">
    <property type="entry name" value="ThrRS_core"/>
</dbReference>
<dbReference type="InterPro" id="IPR012947">
    <property type="entry name" value="tRNA_SAD"/>
</dbReference>
<dbReference type="NCBIfam" id="TIGR00418">
    <property type="entry name" value="thrS"/>
    <property type="match status" value="1"/>
</dbReference>
<dbReference type="PANTHER" id="PTHR11451:SF44">
    <property type="entry name" value="THREONINE--TRNA LIGASE, CHLOROPLASTIC_MITOCHONDRIAL 2"/>
    <property type="match status" value="1"/>
</dbReference>
<dbReference type="PANTHER" id="PTHR11451">
    <property type="entry name" value="THREONINE-TRNA LIGASE"/>
    <property type="match status" value="1"/>
</dbReference>
<dbReference type="Pfam" id="PF03129">
    <property type="entry name" value="HGTP_anticodon"/>
    <property type="match status" value="1"/>
</dbReference>
<dbReference type="Pfam" id="PF02824">
    <property type="entry name" value="TGS"/>
    <property type="match status" value="1"/>
</dbReference>
<dbReference type="Pfam" id="PF00587">
    <property type="entry name" value="tRNA-synt_2b"/>
    <property type="match status" value="1"/>
</dbReference>
<dbReference type="Pfam" id="PF07973">
    <property type="entry name" value="tRNA_SAD"/>
    <property type="match status" value="1"/>
</dbReference>
<dbReference type="PRINTS" id="PR01047">
    <property type="entry name" value="TRNASYNTHTHR"/>
</dbReference>
<dbReference type="SMART" id="SM00863">
    <property type="entry name" value="tRNA_SAD"/>
    <property type="match status" value="1"/>
</dbReference>
<dbReference type="SUPFAM" id="SSF52954">
    <property type="entry name" value="Class II aaRS ABD-related"/>
    <property type="match status" value="1"/>
</dbReference>
<dbReference type="SUPFAM" id="SSF55681">
    <property type="entry name" value="Class II aaRS and biotin synthetases"/>
    <property type="match status" value="1"/>
</dbReference>
<dbReference type="SUPFAM" id="SSF81271">
    <property type="entry name" value="TGS-like"/>
    <property type="match status" value="1"/>
</dbReference>
<dbReference type="SUPFAM" id="SSF55186">
    <property type="entry name" value="ThrRS/AlaRS common domain"/>
    <property type="match status" value="1"/>
</dbReference>
<dbReference type="PROSITE" id="PS50862">
    <property type="entry name" value="AA_TRNA_LIGASE_II"/>
    <property type="match status" value="1"/>
</dbReference>
<dbReference type="PROSITE" id="PS51880">
    <property type="entry name" value="TGS"/>
    <property type="match status" value="1"/>
</dbReference>
<keyword id="KW-0030">Aminoacyl-tRNA synthetase</keyword>
<keyword id="KW-0067">ATP-binding</keyword>
<keyword id="KW-0963">Cytoplasm</keyword>
<keyword id="KW-0436">Ligase</keyword>
<keyword id="KW-0479">Metal-binding</keyword>
<keyword id="KW-0547">Nucleotide-binding</keyword>
<keyword id="KW-0648">Protein biosynthesis</keyword>
<keyword id="KW-1185">Reference proteome</keyword>
<keyword id="KW-0694">RNA-binding</keyword>
<keyword id="KW-0820">tRNA-binding</keyword>
<keyword id="KW-0862">Zinc</keyword>